<organism evidence="16">
    <name type="scientific">Caenorhabditis elegans</name>
    <dbReference type="NCBI Taxonomy" id="6239"/>
    <lineage>
        <taxon>Eukaryota</taxon>
        <taxon>Metazoa</taxon>
        <taxon>Ecdysozoa</taxon>
        <taxon>Nematoda</taxon>
        <taxon>Chromadorea</taxon>
        <taxon>Rhabditida</taxon>
        <taxon>Rhabditina</taxon>
        <taxon>Rhabditomorpha</taxon>
        <taxon>Rhabditoidea</taxon>
        <taxon>Rhabditidae</taxon>
        <taxon>Peloderinae</taxon>
        <taxon>Caenorhabditis</taxon>
    </lineage>
</organism>
<dbReference type="EMBL" id="AF150958">
    <property type="protein sequence ID" value="AAD43178.1"/>
    <property type="molecule type" value="mRNA"/>
</dbReference>
<dbReference type="EMBL" id="BX284606">
    <property type="protein sequence ID" value="CCD67084.1"/>
    <property type="molecule type" value="Genomic_DNA"/>
</dbReference>
<dbReference type="EMBL" id="BX284606">
    <property type="protein sequence ID" value="CCD67085.1"/>
    <property type="molecule type" value="Genomic_DNA"/>
</dbReference>
<dbReference type="PIR" id="T16359">
    <property type="entry name" value="T16359"/>
</dbReference>
<dbReference type="RefSeq" id="NP_001024660.1">
    <molecule id="G5EF33-1"/>
    <property type="nucleotide sequence ID" value="NM_001029489.7"/>
</dbReference>
<dbReference type="RefSeq" id="NP_001024661.1">
    <molecule id="G5EF33-2"/>
    <property type="nucleotide sequence ID" value="NM_001029490.5"/>
</dbReference>
<dbReference type="SMR" id="G5EF33"/>
<dbReference type="FunCoup" id="G5EF33">
    <property type="interactions" value="12"/>
</dbReference>
<dbReference type="STRING" id="6239.F43C9.4a.2"/>
<dbReference type="GlyCosmos" id="G5EF33">
    <property type="glycosylation" value="3 sites, No reported glycans"/>
</dbReference>
<dbReference type="PaxDb" id="6239-F43C9.4a"/>
<dbReference type="EnsemblMetazoa" id="F43C9.4a.1">
    <molecule id="G5EF33-1"/>
    <property type="protein sequence ID" value="F43C9.4a.1"/>
    <property type="gene ID" value="WBGene00003245"/>
</dbReference>
<dbReference type="EnsemblMetazoa" id="F43C9.4a.2">
    <molecule id="G5EF33-1"/>
    <property type="protein sequence ID" value="F43C9.4a.2"/>
    <property type="gene ID" value="WBGene00003245"/>
</dbReference>
<dbReference type="EnsemblMetazoa" id="F43C9.4b.1">
    <molecule id="G5EF33-2"/>
    <property type="protein sequence ID" value="F43C9.4b.1"/>
    <property type="gene ID" value="WBGene00003245"/>
</dbReference>
<dbReference type="GeneID" id="180755"/>
<dbReference type="KEGG" id="cel:CELE_F43C9.4"/>
<dbReference type="AGR" id="WB:WBGene00003245"/>
<dbReference type="CTD" id="180755"/>
<dbReference type="WormBase" id="F43C9.4a">
    <molecule id="G5EF33-1"/>
    <property type="protein sequence ID" value="CE28324"/>
    <property type="gene ID" value="WBGene00003245"/>
    <property type="gene designation" value="mig-13"/>
</dbReference>
<dbReference type="WormBase" id="F43C9.4b">
    <molecule id="G5EF33-2"/>
    <property type="protein sequence ID" value="CE34562"/>
    <property type="gene ID" value="WBGene00003245"/>
    <property type="gene designation" value="mig-13"/>
</dbReference>
<dbReference type="eggNOG" id="ENOG502SC3N">
    <property type="taxonomic scope" value="Eukaryota"/>
</dbReference>
<dbReference type="InParanoid" id="G5EF33"/>
<dbReference type="OMA" id="RNDVHRN"/>
<dbReference type="OrthoDB" id="6514358at2759"/>
<dbReference type="PhylomeDB" id="G5EF33"/>
<dbReference type="PRO" id="PR:G5EF33"/>
<dbReference type="Proteomes" id="UP000001940">
    <property type="component" value="Chromosome X"/>
</dbReference>
<dbReference type="Bgee" id="WBGene00003245">
    <property type="expression patterns" value="Expressed in pharyngeal muscle cell (C elegans) and 3 other cell types or tissues"/>
</dbReference>
<dbReference type="GO" id="GO:0030424">
    <property type="term" value="C:axon"/>
    <property type="evidence" value="ECO:0000314"/>
    <property type="project" value="WormBase"/>
</dbReference>
<dbReference type="GO" id="GO:0030425">
    <property type="term" value="C:dendrite"/>
    <property type="evidence" value="ECO:0007669"/>
    <property type="project" value="UniProtKB-SubCell"/>
</dbReference>
<dbReference type="GO" id="GO:0043025">
    <property type="term" value="C:neuronal cell body"/>
    <property type="evidence" value="ECO:0000314"/>
    <property type="project" value="WormBase"/>
</dbReference>
<dbReference type="GO" id="GO:0043204">
    <property type="term" value="C:perikaryon"/>
    <property type="evidence" value="ECO:0007669"/>
    <property type="project" value="UniProtKB-SubCell"/>
</dbReference>
<dbReference type="GO" id="GO:0005886">
    <property type="term" value="C:plasma membrane"/>
    <property type="evidence" value="ECO:0000314"/>
    <property type="project" value="WormBase"/>
</dbReference>
<dbReference type="GO" id="GO:0030335">
    <property type="term" value="P:positive regulation of cell migration"/>
    <property type="evidence" value="ECO:0000315"/>
    <property type="project" value="WormBase"/>
</dbReference>
<dbReference type="CDD" id="cd00041">
    <property type="entry name" value="CUB"/>
    <property type="match status" value="1"/>
</dbReference>
<dbReference type="CDD" id="cd00112">
    <property type="entry name" value="LDLa"/>
    <property type="match status" value="1"/>
</dbReference>
<dbReference type="FunFam" id="4.10.400.10:FF:000242">
    <property type="entry name" value="CBN-MIG-13 protein"/>
    <property type="match status" value="1"/>
</dbReference>
<dbReference type="Gene3D" id="4.10.400.10">
    <property type="entry name" value="Low-density Lipoprotein Receptor"/>
    <property type="match status" value="1"/>
</dbReference>
<dbReference type="Gene3D" id="2.60.120.290">
    <property type="entry name" value="Spermadhesin, CUB domain"/>
    <property type="match status" value="1"/>
</dbReference>
<dbReference type="InterPro" id="IPR000859">
    <property type="entry name" value="CUB_dom"/>
</dbReference>
<dbReference type="InterPro" id="IPR036055">
    <property type="entry name" value="LDL_receptor-like_sf"/>
</dbReference>
<dbReference type="InterPro" id="IPR002172">
    <property type="entry name" value="LDrepeatLR_classA_rpt"/>
</dbReference>
<dbReference type="InterPro" id="IPR042333">
    <property type="entry name" value="LRAD2/Mig-13-like"/>
</dbReference>
<dbReference type="InterPro" id="IPR035914">
    <property type="entry name" value="Sperma_CUB_dom_sf"/>
</dbReference>
<dbReference type="PANTHER" id="PTHR24652">
    <property type="entry name" value="LOW-DENSITY LIPOPROTEIN RECEPTOR CLASS A DOMAIN-CONTAINING PROTEIN 2"/>
    <property type="match status" value="1"/>
</dbReference>
<dbReference type="Pfam" id="PF00431">
    <property type="entry name" value="CUB"/>
    <property type="match status" value="1"/>
</dbReference>
<dbReference type="Pfam" id="PF00057">
    <property type="entry name" value="Ldl_recept_a"/>
    <property type="match status" value="1"/>
</dbReference>
<dbReference type="SMART" id="SM00042">
    <property type="entry name" value="CUB"/>
    <property type="match status" value="1"/>
</dbReference>
<dbReference type="SMART" id="SM00192">
    <property type="entry name" value="LDLa"/>
    <property type="match status" value="1"/>
</dbReference>
<dbReference type="SUPFAM" id="SSF57424">
    <property type="entry name" value="LDL receptor-like module"/>
    <property type="match status" value="1"/>
</dbReference>
<dbReference type="SUPFAM" id="SSF49854">
    <property type="entry name" value="Spermadhesin, CUB domain"/>
    <property type="match status" value="1"/>
</dbReference>
<dbReference type="PROSITE" id="PS01180">
    <property type="entry name" value="CUB"/>
    <property type="match status" value="1"/>
</dbReference>
<dbReference type="PROSITE" id="PS50068">
    <property type="entry name" value="LDLRA_2"/>
    <property type="match status" value="1"/>
</dbReference>
<name>MIG13_CAEEL</name>
<reference evidence="15" key="1">
    <citation type="journal article" date="1999" name="Cell">
        <title>MIG-13 positions migrating cells along the anteroposterior body axis of C. elegans.</title>
        <authorList>
            <person name="Sym M."/>
            <person name="Robinson N."/>
            <person name="Kenyon C."/>
        </authorList>
    </citation>
    <scope>NUCLEOTIDE SEQUENCE [MRNA]</scope>
    <scope>FUNCTION</scope>
    <scope>SUBCELLULAR LOCATION</scope>
    <scope>TISSUE SPECIFICITY</scope>
    <scope>DEVELOPMENTAL STAGE</scope>
    <scope>DISRUPTION PHENOTYPE</scope>
    <scope>MUTAGENESIS OF CYS-190</scope>
</reference>
<reference evidence="16" key="2">
    <citation type="journal article" date="1998" name="Science">
        <title>Genome sequence of the nematode C. elegans: a platform for investigating biology.</title>
        <authorList>
            <consortium name="The C. elegans sequencing consortium"/>
        </authorList>
    </citation>
    <scope>NUCLEOTIDE SEQUENCE [LARGE SCALE GENOMIC DNA]</scope>
    <source>
        <strain evidence="16">Bristol N2</strain>
    </source>
</reference>
<reference evidence="14" key="3">
    <citation type="journal article" date="1996" name="Development">
        <title>Neuronal cell migration in C. elegans: regulation of Hox gene expression and cell position.</title>
        <authorList>
            <person name="Harris J."/>
            <person name="Honigberg L."/>
            <person name="Robinson N."/>
            <person name="Kenyon C."/>
        </authorList>
    </citation>
    <scope>FUNCTION</scope>
</reference>
<reference evidence="14" key="4">
    <citation type="journal article" date="2005" name="Development">
        <title>The roles of two C. elegans HOX co-factor orthologs in cell migration and vulva development.</title>
        <authorList>
            <person name="Yang L."/>
            <person name="Sym M."/>
            <person name="Kenyon C."/>
        </authorList>
    </citation>
    <scope>FUNCTION</scope>
</reference>
<reference evidence="14" key="5">
    <citation type="journal article" date="2012" name="FEBS Lett.">
        <title>MIG-13 controls anteroposterior cell migration by interacting with UNC-71/ADM-1 and SRC-1 in Caenorhabditis elegans.</title>
        <authorList>
            <person name="Masuda H."/>
            <person name="Nakamura K."/>
            <person name="Takata N."/>
            <person name="Itoh B."/>
            <person name="Hirose T."/>
            <person name="Moribe H."/>
            <person name="Mekada E."/>
            <person name="Okada M."/>
        </authorList>
    </citation>
    <scope>FUNCTION</scope>
    <scope>DISRUPTION PHENOTYPE</scope>
</reference>
<reference evidence="14" key="6">
    <citation type="journal article" date="2013" name="Proc. Natl. Acad. Sci. U.S.A.">
        <title>Transmembrane protein MIG-13 links the Wnt signaling and Hox genes to the cell polarity in neuronal migration.</title>
        <authorList>
            <person name="Wang X."/>
            <person name="Zhou F."/>
            <person name="Lv S."/>
            <person name="Yi P."/>
            <person name="Zhu Z."/>
            <person name="Yang Y."/>
            <person name="Feng G."/>
            <person name="Li W."/>
            <person name="Ou G."/>
        </authorList>
    </citation>
    <scope>FUNCTION</scope>
    <scope>SUBCELLULAR LOCATION</scope>
    <scope>DEVELOPMENTAL STAGE</scope>
    <scope>MUTAGENESIS OF GLY-167</scope>
</reference>
<reference evidence="14" key="7">
    <citation type="journal article" date="2015" name="G3 (Bethesda)">
        <title>SDN-1/Syndecan acts in parallel to the transmembrane molecule MIG-13 to promote anterior neuroblast migration.</title>
        <authorList>
            <person name="Sundararajan L."/>
            <person name="Norris M.L."/>
            <person name="Lundquist E.A."/>
        </authorList>
    </citation>
    <scope>FUNCTION</scope>
    <scope>DISRUPTION PHENOTYPE</scope>
</reference>
<reference evidence="14" key="8">
    <citation type="journal article" date="2016" name="Dev. Cell">
        <title>Functional coordination of WAVE and WASP in C. elegans neuroblast migration.</title>
        <authorList>
            <person name="Zhu Z."/>
            <person name="Chai Y."/>
            <person name="Jiang Y."/>
            <person name="Li W."/>
            <person name="Hu H."/>
            <person name="Li W."/>
            <person name="Wu J.W."/>
            <person name="Wang Z.X."/>
            <person name="Huang S."/>
            <person name="Ou G."/>
        </authorList>
    </citation>
    <scope>FUNCTION</scope>
    <scope>INTERACTION WITH ABL-1 AND SEM-5</scope>
    <scope>SUBCELLULAR LOCATION</scope>
    <scope>DISRUPTION PHENOTYPE</scope>
</reference>
<reference evidence="14" key="9">
    <citation type="journal article" date="2016" name="FEBS Lett.">
        <title>A novel bipartite UNC-101/AP-1 mu1 binding signal mediates KVS-4/Kv2.1 somatodendritic distribution in Caenorhabditis elegans.</title>
        <authorList>
            <person name="Zhou X."/>
            <person name="Zeng J."/>
            <person name="Ouyang C."/>
            <person name="Luo Q."/>
            <person name="Yu M."/>
            <person name="Yang Z."/>
            <person name="Wang H."/>
            <person name="Shen K."/>
            <person name="Shi A."/>
        </authorList>
    </citation>
    <scope>SUBCELLULAR LOCATION</scope>
</reference>
<feature type="signal peptide" evidence="1">
    <location>
        <begin position="1"/>
        <end position="20"/>
    </location>
</feature>
<feature type="chain" id="PRO_5008958413" description="Abnormal cell migration protein 13" evidence="14">
    <location>
        <begin position="21"/>
        <end position="362"/>
    </location>
</feature>
<feature type="topological domain" description="Extracellular" evidence="14">
    <location>
        <begin position="21"/>
        <end position="237"/>
    </location>
</feature>
<feature type="transmembrane region" description="Helical" evidence="1">
    <location>
        <begin position="238"/>
        <end position="258"/>
    </location>
</feature>
<feature type="topological domain" description="Cytoplasmic" evidence="14">
    <location>
        <begin position="259"/>
        <end position="362"/>
    </location>
</feature>
<feature type="domain" description="CUB" evidence="2">
    <location>
        <begin position="36"/>
        <end position="175"/>
    </location>
</feature>
<feature type="domain" description="LDL-receptor class A" evidence="3">
    <location>
        <begin position="182"/>
        <end position="225"/>
    </location>
</feature>
<feature type="region of interest" description="Disordered" evidence="5">
    <location>
        <begin position="275"/>
        <end position="311"/>
    </location>
</feature>
<feature type="compositionally biased region" description="Pro residues" evidence="5">
    <location>
        <begin position="289"/>
        <end position="305"/>
    </location>
</feature>
<feature type="glycosylation site" description="N-linked (GlcNAc...) asparagine" evidence="4">
    <location>
        <position position="63"/>
    </location>
</feature>
<feature type="glycosylation site" description="N-linked (GlcNAc...) asparagine" evidence="4">
    <location>
        <position position="145"/>
    </location>
</feature>
<feature type="glycosylation site" description="N-linked (GlcNAc...) asparagine" evidence="4">
    <location>
        <position position="161"/>
    </location>
</feature>
<feature type="disulfide bond" evidence="2">
    <location>
        <begin position="36"/>
        <end position="68"/>
    </location>
</feature>
<feature type="disulfide bond" evidence="2">
    <location>
        <begin position="98"/>
        <end position="136"/>
    </location>
</feature>
<feature type="disulfide bond" evidence="3">
    <location>
        <begin position="183"/>
        <end position="195"/>
    </location>
</feature>
<feature type="disulfide bond" evidence="3">
    <location>
        <begin position="190"/>
        <end position="208"/>
    </location>
</feature>
<feature type="disulfide bond" evidence="3">
    <location>
        <begin position="202"/>
        <end position="224"/>
    </location>
</feature>
<feature type="splice variant" id="VSP_058961" description="In isoform b." evidence="14">
    <original>MTKLLIALILFSICWKPYSAEPIAS</original>
    <variation>MICIIFLSDSITSTCFYSG</variation>
    <location>
        <begin position="1"/>
        <end position="25"/>
    </location>
</feature>
<feature type="mutagenesis site" description="In cas65; reduced AVM neuron migration." evidence="9">
    <original>G</original>
    <variation>E</variation>
    <location>
        <position position="167"/>
    </location>
</feature>
<feature type="mutagenesis site" description="In mu294; abnormal Q neuroblast lineage migration." evidence="6">
    <original>C</original>
    <variation>Y</variation>
    <location>
        <position position="190"/>
    </location>
</feature>
<keyword id="KW-0025">Alternative splicing</keyword>
<keyword id="KW-1003">Cell membrane</keyword>
<keyword id="KW-0966">Cell projection</keyword>
<keyword id="KW-1015">Disulfide bond</keyword>
<keyword id="KW-0325">Glycoprotein</keyword>
<keyword id="KW-0472">Membrane</keyword>
<keyword id="KW-0675">Receptor</keyword>
<keyword id="KW-1185">Reference proteome</keyword>
<keyword id="KW-0732">Signal</keyword>
<keyword id="KW-0812">Transmembrane</keyword>
<keyword id="KW-1133">Transmembrane helix</keyword>
<gene>
    <name evidence="17" type="primary">mig-13</name>
    <name evidence="17" type="ORF">F43C9.4</name>
</gene>
<sequence length="362" mass="40149">MTKLLIALILFSICWKPYSAEPIASFFDGLDSRNECKARLDRRLTGFSGLLYSHSKYGQEPYNTSRNCVLMLVAPIGYSIRVRALQFDVASTENARTCEKDTLHVFDHETTLDPESYAPARIDDITSPGPIIGQFCGHFENRILNTSSHNALTLWWHSNPNGSNSKGFKLHWGSFRVSKTGNCVTGEFSCGNGECIPIESACDRFADCSNGEDLIHSRQMAANCQNIELDPLTTVSGVFVLLFSATIILSLCGFIMFVCCLCKCLKSTIPIKGASSHTTTTTATDYKPDPPQFYPPSPPKMPPPSAASSYTPRLHHHFEGPLVPSETSAFHSSNRMQNHYSVNSDINGDYTYVRNDVHRNLL</sequence>
<accession>G5EF33</accession>
<accession>H2KZ96</accession>
<proteinExistence type="evidence at protein level"/>
<comment type="function">
    <text evidence="6 7 8 9 10 12 13">Probable receptor that acts as an upstream signaling protein to promote the guidance, migration and positioning of the right Q neuroblast (QR) and its descendants along the anteroposterior body axis, and also the anterior migration of BDU interneurons during larval development (PubMed:10412978, PubMed:15750187, PubMed:22293500, PubMed:23784779, PubMed:26022293, PubMed:27780040, PubMed:8898225). Associates with and recruits the downstream components tyrosine kinase abl-1 and the tyrosine kinase adapter protein sem-5 to the leading edge of migrating Q neuroblasts and their descendants to activate signaling through the two parallel wve-1 and wsp-1 pathways, respectively, and direct migration along the anteroposterior body axis (PubMed:27780040). Involved in cytoskeleton dynamics regulating the organization of the actin cytoskeleton at the leading edge of migrating cells to ensure correct Q cell polarity and promote migration (PubMed:23784779, PubMed:27780040). Role in cytoskeleton organization may be by activation of the wve-1 and wsp-1 pathways which recruit the Arp2/3 complex to the leading edge of migrating cells (PubMed:27780040). Plays a role in regulating the asymmetric distribution of the actin cytoskeleton-binding protein cor-1 in Q neuroblasts which is required for the anterior migration of QR neuroblasts (PubMed:23784779).</text>
</comment>
<comment type="subunit">
    <text evidence="12">Interacts with abl-1 (via SH2 and SH3 domains); the interaction is direct. Interacts with sem-5; the interaction is direct.</text>
</comment>
<comment type="subcellular location">
    <subcellularLocation>
        <location evidence="6 9 12">Cell membrane</location>
        <topology evidence="1">Single-pass type I membrane protein</topology>
    </subcellularLocation>
    <subcellularLocation>
        <location evidence="6">Perikaryon</location>
    </subcellularLocation>
    <subcellularLocation>
        <location evidence="6 11">Cell projection</location>
        <location evidence="6 11">Axon</location>
    </subcellularLocation>
    <subcellularLocation>
        <location evidence="11">Cell projection</location>
        <location evidence="11">Dendrite</location>
    </subcellularLocation>
    <text evidence="12">Localizes to the leading edge of migrating Q-neuroblasts.</text>
</comment>
<comment type="alternative products">
    <event type="alternative splicing"/>
    <isoform>
        <id>G5EF33-1</id>
        <name evidence="17">a</name>
        <sequence type="displayed"/>
    </isoform>
    <isoform>
        <id>G5EF33-2</id>
        <name evidence="18">b</name>
        <sequence type="described" ref="VSP_058961"/>
    </isoform>
</comment>
<comment type="tissue specificity">
    <text evidence="6">Expressed in pharyngeal-intestinal valve cells and ventral cord neurons.</text>
</comment>
<comment type="developmental stage">
    <text evidence="6 9">Expressed from embryogenesis to adulthood (PubMed:10412978). First expressed in the anterior region of comma stage embryos (PubMed:10412978). During embryogenesis, expressed in pharyngeal, hypodermal and neuronal precursors in the anterior body region (PubMed:10412978). During larval development, expressed in the pharyngeal-intestinal valve cells and neurons in the retrovesicular ganglion and the ventral cord (PubMed:10412978). Expressed in migrating QR neuroblasts with higher expression in migrating QR.a/ap cells than QR.p/pa cells (PubMed:23784779).</text>
</comment>
<comment type="disruption phenotype">
    <text evidence="6 8 10 12">Abnormal migration of QR neuroblast lineage cells and BDU interneurons (PubMed:10412978, PubMed:22293500, PubMed:26022293). QR neuroblast descendants QR.paa and QR.pap irregularly migrate towards the posterior side of the body axis while QR.ap descendants fail to migrate towards the head and remain in the central body region or migrate towards the tail (PubMed:10412978). Irregular AQR neuron morphology and polarity during migration in larva at the L4 stage (PubMed:26022293, PubMed:27780040). Loss of F-actin at the leading edge of AQR neurons and as a result AQR neurons do not extend the lamellipodium and thus fail to translocate the cell body towards the anterior of the body leading to posteriorly positioned AQR neurons (PubMed:27780040).</text>
</comment>
<protein>
    <recommendedName>
        <fullName evidence="14">Abnormal cell migration protein 13</fullName>
    </recommendedName>
</protein>
<evidence type="ECO:0000255" key="1"/>
<evidence type="ECO:0000255" key="2">
    <source>
        <dbReference type="PROSITE-ProRule" id="PRU00059"/>
    </source>
</evidence>
<evidence type="ECO:0000255" key="3">
    <source>
        <dbReference type="PROSITE-ProRule" id="PRU00124"/>
    </source>
</evidence>
<evidence type="ECO:0000255" key="4">
    <source>
        <dbReference type="PROSITE-ProRule" id="PRU00498"/>
    </source>
</evidence>
<evidence type="ECO:0000256" key="5">
    <source>
        <dbReference type="SAM" id="MobiDB-lite"/>
    </source>
</evidence>
<evidence type="ECO:0000269" key="6">
    <source>
    </source>
</evidence>
<evidence type="ECO:0000269" key="7">
    <source>
    </source>
</evidence>
<evidence type="ECO:0000269" key="8">
    <source>
    </source>
</evidence>
<evidence type="ECO:0000269" key="9">
    <source>
    </source>
</evidence>
<evidence type="ECO:0000269" key="10">
    <source>
    </source>
</evidence>
<evidence type="ECO:0000269" key="11">
    <source>
    </source>
</evidence>
<evidence type="ECO:0000269" key="12">
    <source>
    </source>
</evidence>
<evidence type="ECO:0000269" key="13">
    <source>
    </source>
</evidence>
<evidence type="ECO:0000305" key="14"/>
<evidence type="ECO:0000312" key="15">
    <source>
        <dbReference type="EMBL" id="AAD43178.1"/>
    </source>
</evidence>
<evidence type="ECO:0000312" key="16">
    <source>
        <dbReference type="Proteomes" id="UP000001940"/>
    </source>
</evidence>
<evidence type="ECO:0000312" key="17">
    <source>
        <dbReference type="WormBase" id="F43C9.4a"/>
    </source>
</evidence>
<evidence type="ECO:0000312" key="18">
    <source>
        <dbReference type="WormBase" id="F43C9.4b"/>
    </source>
</evidence>